<proteinExistence type="evidence at protein level"/>
<gene>
    <name type="primary">Cnot7</name>
    <name type="synonym">Caf1</name>
</gene>
<comment type="function">
    <text evidence="3 5">Has 3'-5' poly(A) exoribonuclease activity for synthetic poly(A) RNA substrate. Its function seems to be partially redundant with that of CNOT8. Catalytic component of the CCR4-NOT complex which is one of the major cellular mRNA deadenylases and is linked to various cellular processes including bulk mRNA degradation, miRNA-mediated repression, translational repression during translational initiation and general transcription regulation. During miRNA-mediated repression the complex also seems to act as translational repressor during translational initiation. Additional complex functions may be a consequence of its influence on mRNA expression. Required for miRNA-mediated mRNA deadenylation. Associates with members of the BTG family such as TOB1 and BTG2 and is required for their anti-proliferative activity.</text>
</comment>
<comment type="catalytic activity">
    <reaction evidence="2">
        <text>Exonucleolytic cleavage of poly(A) to 5'-AMP.</text>
        <dbReference type="EC" id="3.1.13.4"/>
    </reaction>
</comment>
<comment type="cofactor">
    <cofactor evidence="2">
        <name>Mn(2+)</name>
        <dbReference type="ChEBI" id="CHEBI:29035"/>
    </cofactor>
    <cofactor evidence="2">
        <name>Mg(2+)</name>
        <dbReference type="ChEBI" id="CHEBI:18420"/>
    </cofactor>
    <cofactor evidence="2">
        <name>Co(2+)</name>
        <dbReference type="ChEBI" id="CHEBI:48828"/>
    </cofactor>
    <text evidence="2">Binds 2 divalent metal cations per subunit with RNAase activity being higher in presence of Mn(2+) than of Mg(2+) or Co(2+).</text>
</comment>
<comment type="subunit">
    <text evidence="2 3 4 6 7">Component of the CCR4-NOT complex; distinct complexes seem to exist that differ in the participation of probably mutually exclusive catalytic subunits; the complex contains two deadenylase subunits, CNOT6 or CNOT6L, and CNOT7 or CNOT8 (By similarity). In the complex, interacts directly with CNOT1 (By similarity). Interacts with AGO2 (PubMed:19716330). Interacts with TOB1; recruited by TOB1 to a ternary complex with CPEB3 which is required for mRNA deadenylation and decay (By similarity). Interacts with BTG1 (PubMed:9712883). Interacts with BTG2 (PubMed:9712883). Interacts with NANOS2 (PubMed:20133598). Interacts with ZFP36, ZFP36L1 and ZFP36L2; these interactions are inhibited in response to phorbol 12-myristate 13-acetate (PMA) treatment in a p38 MAPK-dependent manner (By similarity). Interacts with BTG4 (PubMed:27065194). Interacts with EIF4E; this interaction is increased by CNOT7 interaction with BTG4 (PubMed:27065194).</text>
</comment>
<comment type="interaction">
    <interactant intactId="EBI-2104739">
        <id>Q60809</id>
    </interactant>
    <interactant intactId="EBI-7847081">
        <id>Q04211</id>
        <label>Btg2</label>
    </interactant>
    <organismsDiffer>false</organismsDiffer>
    <experiments>2</experiments>
</comment>
<comment type="interaction">
    <interactant intactId="EBI-2104739">
        <id>Q60809</id>
    </interactant>
    <interactant intactId="EBI-16204405">
        <id>O70552</id>
        <label>Btg4</label>
    </interactant>
    <organismsDiffer>false</organismsDiffer>
    <experiments>6</experiments>
</comment>
<comment type="interaction">
    <interactant intactId="EBI-2104739">
        <id>Q60809</id>
    </interactant>
    <interactant intactId="EBI-2104661">
        <id>Q8VEG6</id>
        <label>Cnot6l</label>
    </interactant>
    <organismsDiffer>false</organismsDiffer>
    <experiments>2</experiments>
</comment>
<comment type="interaction">
    <interactant intactId="EBI-2104739">
        <id>Q60809</id>
    </interactant>
    <interactant intactId="EBI-742279">
        <id>P62324</id>
        <label>BTG1</label>
    </interactant>
    <organismsDiffer>true</organismsDiffer>
    <experiments>5</experiments>
</comment>
<comment type="interaction">
    <interactant intactId="EBI-2104739">
        <id>Q60809</id>
    </interactant>
    <interactant intactId="EBI-1047576">
        <id>P78543</id>
        <label>BTG2</label>
    </interactant>
    <organismsDiffer>true</organismsDiffer>
    <experiments>5</experiments>
</comment>
<comment type="interaction">
    <interactant intactId="EBI-2104739">
        <id>Q60809</id>
    </interactant>
    <interactant intactId="EBI-2562014">
        <id>Q9UKZ1</id>
        <label>CNOT11</label>
    </interactant>
    <organismsDiffer>true</organismsDiffer>
    <experiments>3</experiments>
</comment>
<comment type="interaction">
    <interactant intactId="EBI-2104739">
        <id>Q60809</id>
    </interactant>
    <interactant intactId="EBI-73440">
        <id>P06730</id>
        <label>EIF4E</label>
    </interactant>
    <organismsDiffer>true</organismsDiffer>
    <experiments>2</experiments>
</comment>
<comment type="interaction">
    <interactant intactId="EBI-2104739">
        <id>Q60809</id>
    </interactant>
    <interactant intactId="EBI-2562000">
        <id>Q14106</id>
        <label>TOB2</label>
    </interactant>
    <organismsDiffer>true</organismsDiffer>
    <experiments>4</experiments>
</comment>
<comment type="subcellular location">
    <subcellularLocation>
        <location evidence="4">Nucleus</location>
    </subcellularLocation>
    <subcellularLocation>
        <location evidence="4">Cytoplasm</location>
        <location evidence="4">P-body</location>
    </subcellularLocation>
    <subcellularLocation>
        <location evidence="2">Cytoplasm</location>
        <location evidence="2">Cytoplasmic ribonucleoprotein granule</location>
    </subcellularLocation>
    <text evidence="2 4">NANOS2 promotes its localization to P-body (PubMed:20133598). Recruited to cytoplasmic ribonucleoprotein membraneless compartments by CAPRIN1, promoting deadenylation of mRNAs (By similarity).</text>
</comment>
<comment type="developmental stage">
    <text evidence="5">Expressed in embryonic stem (ES) cells.</text>
</comment>
<comment type="similarity">
    <text evidence="8">Belongs to the CAF1 family.</text>
</comment>
<evidence type="ECO:0000250" key="1"/>
<evidence type="ECO:0000250" key="2">
    <source>
        <dbReference type="UniProtKB" id="Q9UIV1"/>
    </source>
</evidence>
<evidence type="ECO:0000269" key="3">
    <source>
    </source>
</evidence>
<evidence type="ECO:0000269" key="4">
    <source>
    </source>
</evidence>
<evidence type="ECO:0000269" key="5">
    <source>
    </source>
</evidence>
<evidence type="ECO:0000269" key="6">
    <source>
    </source>
</evidence>
<evidence type="ECO:0000269" key="7">
    <source>
    </source>
</evidence>
<evidence type="ECO:0000305" key="8"/>
<organism>
    <name type="scientific">Mus musculus</name>
    <name type="common">Mouse</name>
    <dbReference type="NCBI Taxonomy" id="10090"/>
    <lineage>
        <taxon>Eukaryota</taxon>
        <taxon>Metazoa</taxon>
        <taxon>Chordata</taxon>
        <taxon>Craniata</taxon>
        <taxon>Vertebrata</taxon>
        <taxon>Euteleostomi</taxon>
        <taxon>Mammalia</taxon>
        <taxon>Eutheria</taxon>
        <taxon>Euarchontoglires</taxon>
        <taxon>Glires</taxon>
        <taxon>Rodentia</taxon>
        <taxon>Myomorpha</taxon>
        <taxon>Muroidea</taxon>
        <taxon>Muridae</taxon>
        <taxon>Murinae</taxon>
        <taxon>Mus</taxon>
        <taxon>Mus</taxon>
    </lineage>
</organism>
<reference key="1">
    <citation type="journal article" date="1995" name="Mol. Cell. Biol.">
        <title>Identification of a mouse protein whose homolog in Saccharomyces cerevisiae is a component of the CCR4 transcriptional regulatory complex.</title>
        <authorList>
            <person name="Draper M.P."/>
            <person name="Salvadore C."/>
            <person name="Denis C.L."/>
        </authorList>
    </citation>
    <scope>NUCLEOTIDE SEQUENCE [MRNA]</scope>
</reference>
<reference key="2">
    <citation type="journal article" date="2004" name="Genome Res.">
        <title>The status, quality, and expansion of the NIH full-length cDNA project: the Mammalian Gene Collection (MGC).</title>
        <authorList>
            <consortium name="The MGC Project Team"/>
        </authorList>
    </citation>
    <scope>NUCLEOTIDE SEQUENCE [LARGE SCALE MRNA]</scope>
    <source>
        <strain>Czech II</strain>
        <tissue>Mammary gland</tissue>
    </source>
</reference>
<reference key="3">
    <citation type="journal article" date="1998" name="J. Biol. Chem.">
        <title>Interaction of BTG1 and p53-regulated BTG2 gene products with mCaf1, the murine homolog of a component of the yeast CCR4 transcriptional regulatory complex.</title>
        <authorList>
            <person name="Rouault J.P."/>
            <person name="Prevot D."/>
            <person name="Berthet C."/>
            <person name="Birot A.M."/>
            <person name="Billaud M."/>
            <person name="Magaud J.P."/>
            <person name="Corbo L."/>
        </authorList>
    </citation>
    <scope>INTERACTION WITH BTG1 AND BTG2</scope>
</reference>
<reference key="4">
    <citation type="journal article" date="2009" name="Mol. Cell">
        <title>Mammalian miRNA RISC recruits CAF1 and PABP to affect PABP-dependent deadenylation.</title>
        <authorList>
            <person name="Fabian M.R."/>
            <person name="Mathonnet G."/>
            <person name="Sundermeier T."/>
            <person name="Mathys H."/>
            <person name="Zipprich J.T."/>
            <person name="Svitkin Y.V."/>
            <person name="Rivas F."/>
            <person name="Jinek M."/>
            <person name="Wohlschlegel J."/>
            <person name="Doudna J.A."/>
            <person name="Chen C.Y."/>
            <person name="Shyu A.B."/>
            <person name="Yates J.R. III"/>
            <person name="Hannon G.J."/>
            <person name="Filipowicz W."/>
            <person name="Duchaine T.F."/>
            <person name="Sonenberg N."/>
        </authorList>
    </citation>
    <scope>FUNCTION</scope>
    <scope>INTERACTION WITH AGO2</scope>
</reference>
<reference key="5">
    <citation type="journal article" date="2010" name="Cell">
        <title>A tissue-specific atlas of mouse protein phosphorylation and expression.</title>
        <authorList>
            <person name="Huttlin E.L."/>
            <person name="Jedrychowski M.P."/>
            <person name="Elias J.E."/>
            <person name="Goswami T."/>
            <person name="Rad R."/>
            <person name="Beausoleil S.A."/>
            <person name="Villen J."/>
            <person name="Haas W."/>
            <person name="Sowa M.E."/>
            <person name="Gygi S.P."/>
        </authorList>
    </citation>
    <scope>IDENTIFICATION BY MASS SPECTROMETRY [LARGE SCALE ANALYSIS]</scope>
    <source>
        <tissue>Brain</tissue>
        <tissue>Lung</tissue>
        <tissue>Spleen</tissue>
        <tissue>Testis</tissue>
    </source>
</reference>
<reference key="6">
    <citation type="journal article" date="2010" name="Proc. Natl. Acad. Sci. U.S.A.">
        <title>NANOS2 interacts with the CCR4-NOT deadenylation complex and leads to suppression of specific RNAs.</title>
        <authorList>
            <person name="Suzuki A."/>
            <person name="Igarashi K."/>
            <person name="Aisaki K."/>
            <person name="Kanno J."/>
            <person name="Saga Y."/>
        </authorList>
    </citation>
    <scope>SUBCELLULAR LOCATION</scope>
    <scope>INTERACTION WITH NANOS2</scope>
</reference>
<reference key="7">
    <citation type="journal article" date="2012" name="Stem Cells">
        <title>Cnot1, Cnot2, and Cnot3 maintain mouse and human ESC identity and inhibit extraembryonic differentiation.</title>
        <authorList>
            <person name="Zheng X."/>
            <person name="Dumitru R."/>
            <person name="Lackford B.L."/>
            <person name="Freudenberg J.M."/>
            <person name="Singh A.P."/>
            <person name="Archer T.K."/>
            <person name="Jothi R."/>
            <person name="Hu G."/>
        </authorList>
    </citation>
    <scope>FUNCTION</scope>
    <scope>DEVELOPMENTAL STAGE</scope>
</reference>
<reference key="8">
    <citation type="journal article" date="2016" name="Nat. Struct. Mol. Biol.">
        <title>BTG4 is a meiotic cell cycle-coupled maternal-zygotic-transition licensing factor in oocytes.</title>
        <authorList>
            <person name="Yu C."/>
            <person name="Ji S.Y."/>
            <person name="Sha Q.Q."/>
            <person name="Dang Y."/>
            <person name="Zhou J.J."/>
            <person name="Zhang Y.L."/>
            <person name="Liu Y."/>
            <person name="Wang Z.W."/>
            <person name="Hu B."/>
            <person name="Sun Q.Y."/>
            <person name="Sun S.C."/>
            <person name="Tang F."/>
            <person name="Fan H.Y."/>
        </authorList>
    </citation>
    <scope>INTERACTION WITH BTG4 AND EIF4E</scope>
    <scope>MUTAGENESIS OF LYS-203</scope>
</reference>
<feature type="chain" id="PRO_0000212845" description="CCR4-NOT transcription complex subunit 7">
    <location>
        <begin position="1"/>
        <end position="285"/>
    </location>
</feature>
<feature type="binding site" evidence="1">
    <location>
        <position position="40"/>
    </location>
    <ligand>
        <name>a divalent metal cation</name>
        <dbReference type="ChEBI" id="CHEBI:60240"/>
        <label>1</label>
        <note>catalytic</note>
    </ligand>
</feature>
<feature type="binding site" evidence="1">
    <location>
        <position position="40"/>
    </location>
    <ligand>
        <name>a divalent metal cation</name>
        <dbReference type="ChEBI" id="CHEBI:60240"/>
        <label>2</label>
        <note>catalytic</note>
    </ligand>
</feature>
<feature type="binding site" evidence="1">
    <location>
        <position position="42"/>
    </location>
    <ligand>
        <name>a divalent metal cation</name>
        <dbReference type="ChEBI" id="CHEBI:60240"/>
        <label>2</label>
        <note>catalytic</note>
    </ligand>
</feature>
<feature type="binding site" evidence="1">
    <location>
        <position position="161"/>
    </location>
    <ligand>
        <name>a divalent metal cation</name>
        <dbReference type="ChEBI" id="CHEBI:60240"/>
        <label>1</label>
        <note>catalytic</note>
    </ligand>
</feature>
<feature type="binding site" evidence="1">
    <location>
        <position position="230"/>
    </location>
    <ligand>
        <name>a divalent metal cation</name>
        <dbReference type="ChEBI" id="CHEBI:60240"/>
        <label>2</label>
        <note>catalytic</note>
    </ligand>
</feature>
<feature type="binding site" evidence="1">
    <location>
        <position position="278"/>
    </location>
    <ligand>
        <name>a divalent metal cation</name>
        <dbReference type="ChEBI" id="CHEBI:60240"/>
        <label>1</label>
        <note>catalytic</note>
    </ligand>
</feature>
<feature type="mutagenesis site" description="Severe decrease of interaction with BTG4." evidence="6">
    <original>K</original>
    <variation>A</variation>
    <location>
        <position position="203"/>
    </location>
</feature>
<accession>Q60809</accession>
<name>CNOT7_MOUSE</name>
<protein>
    <recommendedName>
        <fullName>CCR4-NOT transcription complex subunit 7</fullName>
        <ecNumber>3.1.13.4</ecNumber>
    </recommendedName>
    <alternativeName>
        <fullName>CCR4-associated factor 1</fullName>
        <shortName>CAF-1</shortName>
    </alternativeName>
</protein>
<dbReference type="EC" id="3.1.13.4"/>
<dbReference type="EMBL" id="U21855">
    <property type="protein sequence ID" value="AAA87455.1"/>
    <property type="molecule type" value="mRNA"/>
</dbReference>
<dbReference type="EMBL" id="BC006021">
    <property type="protein sequence ID" value="AAH06021.1"/>
    <property type="molecule type" value="mRNA"/>
</dbReference>
<dbReference type="CCDS" id="CCDS22253.1"/>
<dbReference type="RefSeq" id="NP_001258471.1">
    <property type="nucleotide sequence ID" value="NM_001271542.1"/>
</dbReference>
<dbReference type="RefSeq" id="NP_001348867.1">
    <property type="nucleotide sequence ID" value="NM_001361938.1"/>
</dbReference>
<dbReference type="RefSeq" id="NP_035265.1">
    <property type="nucleotide sequence ID" value="NM_011135.5"/>
</dbReference>
<dbReference type="RefSeq" id="XP_011240485.1">
    <property type="nucleotide sequence ID" value="XM_011242183.1"/>
</dbReference>
<dbReference type="SMR" id="Q60809"/>
<dbReference type="BioGRID" id="202298">
    <property type="interactions" value="10"/>
</dbReference>
<dbReference type="CORUM" id="Q60809"/>
<dbReference type="DIP" id="DIP-46843N"/>
<dbReference type="FunCoup" id="Q60809">
    <property type="interactions" value="4792"/>
</dbReference>
<dbReference type="IntAct" id="Q60809">
    <property type="interactions" value="29"/>
</dbReference>
<dbReference type="MINT" id="Q60809"/>
<dbReference type="STRING" id="10090.ENSMUSP00000117304"/>
<dbReference type="iPTMnet" id="Q60809"/>
<dbReference type="PhosphoSitePlus" id="Q60809"/>
<dbReference type="PaxDb" id="10090-ENSMUSP00000117304"/>
<dbReference type="ProteomicsDB" id="283408"/>
<dbReference type="Pumba" id="Q60809"/>
<dbReference type="Antibodypedia" id="22252">
    <property type="antibodies" value="203 antibodies from 28 providers"/>
</dbReference>
<dbReference type="DNASU" id="18983"/>
<dbReference type="Ensembl" id="ENSMUST00000034012.10">
    <property type="protein sequence ID" value="ENSMUSP00000034012.4"/>
    <property type="gene ID" value="ENSMUSG00000031601.17"/>
</dbReference>
<dbReference type="Ensembl" id="ENSMUST00000132032.8">
    <property type="protein sequence ID" value="ENSMUSP00000122933.2"/>
    <property type="gene ID" value="ENSMUSG00000031601.17"/>
</dbReference>
<dbReference type="Ensembl" id="ENSMUST00000149992.2">
    <property type="protein sequence ID" value="ENSMUSP00000117304.2"/>
    <property type="gene ID" value="ENSMUSG00000031601.17"/>
</dbReference>
<dbReference type="GeneID" id="18983"/>
<dbReference type="KEGG" id="mmu:18983"/>
<dbReference type="UCSC" id="uc009lmq.2">
    <property type="organism name" value="mouse"/>
</dbReference>
<dbReference type="AGR" id="MGI:1298230"/>
<dbReference type="CTD" id="29883"/>
<dbReference type="MGI" id="MGI:1298230">
    <property type="gene designation" value="Cnot7"/>
</dbReference>
<dbReference type="VEuPathDB" id="HostDB:ENSMUSG00000031601"/>
<dbReference type="eggNOG" id="KOG0304">
    <property type="taxonomic scope" value="Eukaryota"/>
</dbReference>
<dbReference type="GeneTree" id="ENSGT00390000000080"/>
<dbReference type="HOGENOM" id="CLU_027974_0_1_1"/>
<dbReference type="InParanoid" id="Q60809"/>
<dbReference type="OMA" id="IKFMMRA"/>
<dbReference type="OrthoDB" id="1164111at2759"/>
<dbReference type="PhylomeDB" id="Q60809"/>
<dbReference type="TreeFam" id="TF314185"/>
<dbReference type="Reactome" id="R-MMU-429947">
    <property type="pathway name" value="Deadenylation of mRNA"/>
</dbReference>
<dbReference type="Reactome" id="R-MMU-6804115">
    <property type="pathway name" value="TP53 regulates transcription of additional cell cycle genes whose exact role in the p53 pathway remain uncertain"/>
</dbReference>
<dbReference type="BioGRID-ORCS" id="18983">
    <property type="hits" value="4 hits in 77 CRISPR screens"/>
</dbReference>
<dbReference type="ChiTaRS" id="Cnot7">
    <property type="organism name" value="mouse"/>
</dbReference>
<dbReference type="PRO" id="PR:Q60809"/>
<dbReference type="Proteomes" id="UP000000589">
    <property type="component" value="Chromosome 8"/>
</dbReference>
<dbReference type="RNAct" id="Q60809">
    <property type="molecule type" value="protein"/>
</dbReference>
<dbReference type="Bgee" id="ENSMUSG00000031601">
    <property type="expression patterns" value="Expressed in superior cervical ganglion and 288 other cell types or tissues"/>
</dbReference>
<dbReference type="ExpressionAtlas" id="Q60809">
    <property type="expression patterns" value="baseline and differential"/>
</dbReference>
<dbReference type="GO" id="GO:0030014">
    <property type="term" value="C:CCR4-NOT complex"/>
    <property type="evidence" value="ECO:0000353"/>
    <property type="project" value="MGI"/>
</dbReference>
<dbReference type="GO" id="GO:0005737">
    <property type="term" value="C:cytoplasm"/>
    <property type="evidence" value="ECO:0000314"/>
    <property type="project" value="MGI"/>
</dbReference>
<dbReference type="GO" id="GO:0005829">
    <property type="term" value="C:cytosol"/>
    <property type="evidence" value="ECO:0000304"/>
    <property type="project" value="Reactome"/>
</dbReference>
<dbReference type="GO" id="GO:0016607">
    <property type="term" value="C:nuclear speck"/>
    <property type="evidence" value="ECO:0007669"/>
    <property type="project" value="Ensembl"/>
</dbReference>
<dbReference type="GO" id="GO:0005634">
    <property type="term" value="C:nucleus"/>
    <property type="evidence" value="ECO:0000314"/>
    <property type="project" value="MGI"/>
</dbReference>
<dbReference type="GO" id="GO:0000932">
    <property type="term" value="C:P-body"/>
    <property type="evidence" value="ECO:0000314"/>
    <property type="project" value="UniProtKB"/>
</dbReference>
<dbReference type="GO" id="GO:0000175">
    <property type="term" value="F:3'-5'-RNA exonuclease activity"/>
    <property type="evidence" value="ECO:0000250"/>
    <property type="project" value="UniProtKB"/>
</dbReference>
<dbReference type="GO" id="GO:0140297">
    <property type="term" value="F:DNA-binding transcription factor binding"/>
    <property type="evidence" value="ECO:0007669"/>
    <property type="project" value="Ensembl"/>
</dbReference>
<dbReference type="GO" id="GO:0046872">
    <property type="term" value="F:metal ion binding"/>
    <property type="evidence" value="ECO:0007669"/>
    <property type="project" value="UniProtKB-KW"/>
</dbReference>
<dbReference type="GO" id="GO:0034584">
    <property type="term" value="F:piRNA binding"/>
    <property type="evidence" value="ECO:0000314"/>
    <property type="project" value="FlyBase"/>
</dbReference>
<dbReference type="GO" id="GO:0004535">
    <property type="term" value="F:poly(A)-specific ribonuclease activity"/>
    <property type="evidence" value="ECO:0000315"/>
    <property type="project" value="MGI"/>
</dbReference>
<dbReference type="GO" id="GO:0004532">
    <property type="term" value="F:RNA exonuclease activity"/>
    <property type="evidence" value="ECO:0000250"/>
    <property type="project" value="UniProtKB"/>
</dbReference>
<dbReference type="GO" id="GO:0003714">
    <property type="term" value="F:transcription corepressor activity"/>
    <property type="evidence" value="ECO:0007669"/>
    <property type="project" value="Ensembl"/>
</dbReference>
<dbReference type="GO" id="GO:0000290">
    <property type="term" value="P:deadenylation-dependent decapping of nuclear-transcribed mRNA"/>
    <property type="evidence" value="ECO:0000315"/>
    <property type="project" value="MGI"/>
</dbReference>
<dbReference type="GO" id="GO:0051607">
    <property type="term" value="P:defense response to virus"/>
    <property type="evidence" value="ECO:0007669"/>
    <property type="project" value="Ensembl"/>
</dbReference>
<dbReference type="GO" id="GO:0035279">
    <property type="term" value="P:miRNA-mediated gene silencing by mRNA destabilization"/>
    <property type="evidence" value="ECO:0000250"/>
    <property type="project" value="UniProtKB"/>
</dbReference>
<dbReference type="GO" id="GO:0008285">
    <property type="term" value="P:negative regulation of cell population proliferation"/>
    <property type="evidence" value="ECO:0000250"/>
    <property type="project" value="UniProtKB"/>
</dbReference>
<dbReference type="GO" id="GO:0060339">
    <property type="term" value="P:negative regulation of type I interferon-mediated signaling pathway"/>
    <property type="evidence" value="ECO:0007669"/>
    <property type="project" value="Ensembl"/>
</dbReference>
<dbReference type="GO" id="GO:0000289">
    <property type="term" value="P:nuclear-transcribed mRNA poly(A) tail shortening"/>
    <property type="evidence" value="ECO:0000315"/>
    <property type="project" value="MGI"/>
</dbReference>
<dbReference type="GO" id="GO:0033962">
    <property type="term" value="P:P-body assembly"/>
    <property type="evidence" value="ECO:0000316"/>
    <property type="project" value="MGI"/>
</dbReference>
<dbReference type="GO" id="GO:0140991">
    <property type="term" value="P:piRNA-mediated gene silencing by mRNA destabilization"/>
    <property type="evidence" value="ECO:0000353"/>
    <property type="project" value="FlyBase"/>
</dbReference>
<dbReference type="GO" id="GO:0008284">
    <property type="term" value="P:positive regulation of cell population proliferation"/>
    <property type="evidence" value="ECO:0000250"/>
    <property type="project" value="UniProtKB"/>
</dbReference>
<dbReference type="GO" id="GO:1900153">
    <property type="term" value="P:positive regulation of nuclear-transcribed mRNA catabolic process, deadenylation-dependent decay"/>
    <property type="evidence" value="ECO:0000315"/>
    <property type="project" value="UniProtKB"/>
</dbReference>
<dbReference type="GO" id="GO:0060213">
    <property type="term" value="P:positive regulation of nuclear-transcribed mRNA poly(A) tail shortening"/>
    <property type="evidence" value="ECO:0000315"/>
    <property type="project" value="UniProtKB"/>
</dbReference>
<dbReference type="GO" id="GO:0045944">
    <property type="term" value="P:positive regulation of transcription by RNA polymerase II"/>
    <property type="evidence" value="ECO:0000314"/>
    <property type="project" value="MGI"/>
</dbReference>
<dbReference type="GO" id="GO:0045070">
    <property type="term" value="P:positive regulation of viral genome replication"/>
    <property type="evidence" value="ECO:0007669"/>
    <property type="project" value="Ensembl"/>
</dbReference>
<dbReference type="GO" id="GO:0006417">
    <property type="term" value="P:regulation of translation"/>
    <property type="evidence" value="ECO:0007669"/>
    <property type="project" value="UniProtKB-KW"/>
</dbReference>
<dbReference type="GO" id="GO:0031047">
    <property type="term" value="P:regulatory ncRNA-mediated gene silencing"/>
    <property type="evidence" value="ECO:0000315"/>
    <property type="project" value="UniProtKB"/>
</dbReference>
<dbReference type="GO" id="GO:0007283">
    <property type="term" value="P:spermatogenesis"/>
    <property type="evidence" value="ECO:0000269"/>
    <property type="project" value="FlyBase"/>
</dbReference>
<dbReference type="FunFam" id="3.30.420.10:FF:000005">
    <property type="entry name" value="CCR4-NOT transcription complex subunit 7"/>
    <property type="match status" value="1"/>
</dbReference>
<dbReference type="Gene3D" id="3.30.420.10">
    <property type="entry name" value="Ribonuclease H-like superfamily/Ribonuclease H"/>
    <property type="match status" value="1"/>
</dbReference>
<dbReference type="InterPro" id="IPR039637">
    <property type="entry name" value="CNOT7/CNOT8/Pop2"/>
</dbReference>
<dbReference type="InterPro" id="IPR006941">
    <property type="entry name" value="RNase_CAF1"/>
</dbReference>
<dbReference type="InterPro" id="IPR012337">
    <property type="entry name" value="RNaseH-like_sf"/>
</dbReference>
<dbReference type="InterPro" id="IPR036397">
    <property type="entry name" value="RNaseH_sf"/>
</dbReference>
<dbReference type="PANTHER" id="PTHR10797">
    <property type="entry name" value="CCR4-NOT TRANSCRIPTION COMPLEX SUBUNIT"/>
    <property type="match status" value="1"/>
</dbReference>
<dbReference type="Pfam" id="PF04857">
    <property type="entry name" value="CAF1"/>
    <property type="match status" value="2"/>
</dbReference>
<dbReference type="SUPFAM" id="SSF53098">
    <property type="entry name" value="Ribonuclease H-like"/>
    <property type="match status" value="1"/>
</dbReference>
<keyword id="KW-0963">Cytoplasm</keyword>
<keyword id="KW-0269">Exonuclease</keyword>
<keyword id="KW-0378">Hydrolase</keyword>
<keyword id="KW-0460">Magnesium</keyword>
<keyword id="KW-0479">Metal-binding</keyword>
<keyword id="KW-0540">Nuclease</keyword>
<keyword id="KW-0539">Nucleus</keyword>
<keyword id="KW-1185">Reference proteome</keyword>
<keyword id="KW-0678">Repressor</keyword>
<keyword id="KW-0694">RNA-binding</keyword>
<keyword id="KW-0943">RNA-mediated gene silencing</keyword>
<keyword id="KW-0804">Transcription</keyword>
<keyword id="KW-0805">Transcription regulation</keyword>
<keyword id="KW-0810">Translation regulation</keyword>
<sequence>MPAATVDHSQRICEVWACNLDEEMKKIRQVIRKYNYVAMDTEFPGVVARPIGEFRSNADYQYQLLRCNVDLLKIIQLGLTFMNEQGEYPPGTSTWQFNFKFNLTEDMYAQDSIELLTTSGIQFKKHEEEGIETQYFAELLMTSGVVLCEGVKWLSFHSGYDFGYLIKILTNSNLPEEELDFFEILRLFFPVIYDVKYLMKSCKNLKGGLQEVAEQLELERIGPQHQAGSDSLLTGMAFFKMREMFFEDHIDDAKYCGHLYGLGSGSSYVQNGTGNAYEEEASKQS</sequence>